<evidence type="ECO:0000250" key="1"/>
<evidence type="ECO:0000255" key="2">
    <source>
        <dbReference type="PROSITE-ProRule" id="PRU01083"/>
    </source>
</evidence>
<evidence type="ECO:0000305" key="3"/>
<reference key="1">
    <citation type="journal article" date="2005" name="BMC Genomics">
        <title>Characterization of 954 bovine full-CDS cDNA sequences.</title>
        <authorList>
            <person name="Harhay G.P."/>
            <person name="Sonstegard T.S."/>
            <person name="Keele J.W."/>
            <person name="Heaton M.P."/>
            <person name="Clawson M.L."/>
            <person name="Snelling W.M."/>
            <person name="Wiedmann R.T."/>
            <person name="Van Tassell C.P."/>
            <person name="Smith T.P.L."/>
        </authorList>
    </citation>
    <scope>NUCLEOTIDE SEQUENCE [LARGE SCALE MRNA]</scope>
</reference>
<proteinExistence type="evidence at transcript level"/>
<comment type="function">
    <text evidence="1">Probably participates in deamination of adenosine-34 to inosine in many tRNAs.</text>
</comment>
<comment type="catalytic activity">
    <reaction evidence="3">
        <text>adenosine(34) in tRNA + H2O + H(+) = inosine(34) in tRNA + NH4(+)</text>
        <dbReference type="Rhea" id="RHEA:43168"/>
        <dbReference type="Rhea" id="RHEA-COMP:10373"/>
        <dbReference type="Rhea" id="RHEA-COMP:10374"/>
        <dbReference type="ChEBI" id="CHEBI:15377"/>
        <dbReference type="ChEBI" id="CHEBI:15378"/>
        <dbReference type="ChEBI" id="CHEBI:28938"/>
        <dbReference type="ChEBI" id="CHEBI:74411"/>
        <dbReference type="ChEBI" id="CHEBI:82852"/>
        <dbReference type="EC" id="3.5.4.33"/>
    </reaction>
</comment>
<comment type="cofactor">
    <cofactor evidence="1">
        <name>Zn(2+)</name>
        <dbReference type="ChEBI" id="CHEBI:29105"/>
    </cofactor>
</comment>
<comment type="similarity">
    <text evidence="3">Belongs to the cytidine and deoxycytidylate deaminase family. ADAT2 subfamily.</text>
</comment>
<dbReference type="EC" id="3.5.4.33" evidence="3"/>
<dbReference type="EMBL" id="BT020923">
    <property type="protein sequence ID" value="AAX08940.1"/>
    <property type="molecule type" value="mRNA"/>
</dbReference>
<dbReference type="RefSeq" id="NP_001029952.1">
    <property type="nucleotide sequence ID" value="NM_001034780.1"/>
</dbReference>
<dbReference type="SMR" id="Q5E9J7"/>
<dbReference type="FunCoup" id="Q5E9J7">
    <property type="interactions" value="1597"/>
</dbReference>
<dbReference type="STRING" id="9913.ENSBTAP00000037541"/>
<dbReference type="PaxDb" id="9913-ENSBTAP00000037541"/>
<dbReference type="Ensembl" id="ENSBTAT00000037717.4">
    <property type="protein sequence ID" value="ENSBTAP00000037541.2"/>
    <property type="gene ID" value="ENSBTAG00000026519.4"/>
</dbReference>
<dbReference type="GeneID" id="615418"/>
<dbReference type="KEGG" id="bta:615418"/>
<dbReference type="CTD" id="134637"/>
<dbReference type="VEuPathDB" id="HostDB:ENSBTAG00000026519"/>
<dbReference type="VGNC" id="VGNC:25638">
    <property type="gene designation" value="ADAT2"/>
</dbReference>
<dbReference type="eggNOG" id="KOG1018">
    <property type="taxonomic scope" value="Eukaryota"/>
</dbReference>
<dbReference type="GeneTree" id="ENSGT00390000000280"/>
<dbReference type="HOGENOM" id="CLU_025810_8_1_1"/>
<dbReference type="InParanoid" id="Q5E9J7"/>
<dbReference type="OMA" id="PCQMCAG"/>
<dbReference type="OrthoDB" id="408702at2759"/>
<dbReference type="TreeFam" id="TF313782"/>
<dbReference type="Proteomes" id="UP000009136">
    <property type="component" value="Chromosome 9"/>
</dbReference>
<dbReference type="Bgee" id="ENSBTAG00000026519">
    <property type="expression patterns" value="Expressed in semen and 103 other cell types or tissues"/>
</dbReference>
<dbReference type="GO" id="GO:0052717">
    <property type="term" value="F:tRNA-specific adenosine-34 deaminase activity"/>
    <property type="evidence" value="ECO:0000318"/>
    <property type="project" value="GO_Central"/>
</dbReference>
<dbReference type="GO" id="GO:0008270">
    <property type="term" value="F:zinc ion binding"/>
    <property type="evidence" value="ECO:0007669"/>
    <property type="project" value="InterPro"/>
</dbReference>
<dbReference type="GO" id="GO:0002100">
    <property type="term" value="P:tRNA wobble adenosine to inosine editing"/>
    <property type="evidence" value="ECO:0000318"/>
    <property type="project" value="GO_Central"/>
</dbReference>
<dbReference type="CDD" id="cd01285">
    <property type="entry name" value="nucleoside_deaminase"/>
    <property type="match status" value="1"/>
</dbReference>
<dbReference type="FunFam" id="3.40.140.10:FF:000036">
    <property type="entry name" value="tRNA-specific adenosine deaminase 2"/>
    <property type="match status" value="1"/>
</dbReference>
<dbReference type="Gene3D" id="3.40.140.10">
    <property type="entry name" value="Cytidine Deaminase, domain 2"/>
    <property type="match status" value="1"/>
</dbReference>
<dbReference type="HAMAP" id="MF_00972">
    <property type="entry name" value="tRNA_aden_deaminase"/>
    <property type="match status" value="1"/>
</dbReference>
<dbReference type="InterPro" id="IPR016192">
    <property type="entry name" value="APOBEC/CMP_deaminase_Zn-bd"/>
</dbReference>
<dbReference type="InterPro" id="IPR002125">
    <property type="entry name" value="CMP_dCMP_dom"/>
</dbReference>
<dbReference type="InterPro" id="IPR016193">
    <property type="entry name" value="Cytidine_deaminase-like"/>
</dbReference>
<dbReference type="InterPro" id="IPR028883">
    <property type="entry name" value="tRNA_aden_deaminase"/>
</dbReference>
<dbReference type="PANTHER" id="PTHR11079">
    <property type="entry name" value="CYTOSINE DEAMINASE FAMILY MEMBER"/>
    <property type="match status" value="1"/>
</dbReference>
<dbReference type="PANTHER" id="PTHR11079:SF149">
    <property type="entry name" value="TRNA-SPECIFIC ADENOSINE DEAMINASE 2"/>
    <property type="match status" value="1"/>
</dbReference>
<dbReference type="Pfam" id="PF14437">
    <property type="entry name" value="MafB19-deam"/>
    <property type="match status" value="1"/>
</dbReference>
<dbReference type="SUPFAM" id="SSF53927">
    <property type="entry name" value="Cytidine deaminase-like"/>
    <property type="match status" value="1"/>
</dbReference>
<dbReference type="PROSITE" id="PS00903">
    <property type="entry name" value="CYT_DCMP_DEAMINASES_1"/>
    <property type="match status" value="1"/>
</dbReference>
<dbReference type="PROSITE" id="PS51747">
    <property type="entry name" value="CYT_DCMP_DEAMINASES_2"/>
    <property type="match status" value="1"/>
</dbReference>
<gene>
    <name type="primary">DEADC1</name>
    <name type="synonym">ADAT2</name>
</gene>
<accession>Q5E9J7</accession>
<organism>
    <name type="scientific">Bos taurus</name>
    <name type="common">Bovine</name>
    <dbReference type="NCBI Taxonomy" id="9913"/>
    <lineage>
        <taxon>Eukaryota</taxon>
        <taxon>Metazoa</taxon>
        <taxon>Chordata</taxon>
        <taxon>Craniata</taxon>
        <taxon>Vertebrata</taxon>
        <taxon>Euteleostomi</taxon>
        <taxon>Mammalia</taxon>
        <taxon>Eutheria</taxon>
        <taxon>Laurasiatheria</taxon>
        <taxon>Artiodactyla</taxon>
        <taxon>Ruminantia</taxon>
        <taxon>Pecora</taxon>
        <taxon>Bovidae</taxon>
        <taxon>Bovinae</taxon>
        <taxon>Bos</taxon>
    </lineage>
</organism>
<protein>
    <recommendedName>
        <fullName>tRNA-specific adenosine deaminase 2</fullName>
        <ecNumber evidence="3">3.5.4.33</ecNumber>
    </recommendedName>
    <alternativeName>
        <fullName>Deaminase domain-containing protein 1</fullName>
    </alternativeName>
    <alternativeName>
        <fullName>tRNA-specific adenosine-34 deaminase subunit ADAT2</fullName>
    </alternativeName>
</protein>
<sequence length="191" mass="21127">MEAKAGPTAATDGAYSVSAEETEKWMEQAMQMAKDALDNTEVPVGCLMVYNNEVVGKGRNEVNQTKNATRHAEMVAIDQALDWCRRRGRSPSEVFEHTVLYVTVEPCIMCAAALRLMRIPLVVYGCQNERFGGCGSVLDIASADLPSTGKPFQCTPGYRAEEAVEMLKTFYKQENPNAPKSKVRKKECHKS</sequence>
<feature type="chain" id="PRO_0000287652" description="tRNA-specific adenosine deaminase 2">
    <location>
        <begin position="1"/>
        <end position="191"/>
    </location>
</feature>
<feature type="domain" description="CMP/dCMP-type deaminase" evidence="2">
    <location>
        <begin position="20"/>
        <end position="145"/>
    </location>
</feature>
<feature type="active site" description="Proton donor" evidence="1">
    <location>
        <position position="73"/>
    </location>
</feature>
<feature type="binding site" evidence="1">
    <location>
        <position position="71"/>
    </location>
    <ligand>
        <name>Zn(2+)</name>
        <dbReference type="ChEBI" id="CHEBI:29105"/>
        <note>catalytic</note>
    </ligand>
</feature>
<feature type="binding site" evidence="1">
    <location>
        <position position="107"/>
    </location>
    <ligand>
        <name>Zn(2+)</name>
        <dbReference type="ChEBI" id="CHEBI:29105"/>
        <note>catalytic</note>
    </ligand>
</feature>
<feature type="binding site" evidence="1">
    <location>
        <position position="110"/>
    </location>
    <ligand>
        <name>Zn(2+)</name>
        <dbReference type="ChEBI" id="CHEBI:29105"/>
        <note>catalytic</note>
    </ligand>
</feature>
<keyword id="KW-0378">Hydrolase</keyword>
<keyword id="KW-0479">Metal-binding</keyword>
<keyword id="KW-1185">Reference proteome</keyword>
<keyword id="KW-0819">tRNA processing</keyword>
<keyword id="KW-0862">Zinc</keyword>
<name>ADAT2_BOVIN</name>